<name>WRK28_ORYSI</name>
<reference key="1">
    <citation type="journal article" date="2005" name="PLoS Biol.">
        <title>The genomes of Oryza sativa: a history of duplications.</title>
        <authorList>
            <person name="Yu J."/>
            <person name="Wang J."/>
            <person name="Lin W."/>
            <person name="Li S."/>
            <person name="Li H."/>
            <person name="Zhou J."/>
            <person name="Ni P."/>
            <person name="Dong W."/>
            <person name="Hu S."/>
            <person name="Zeng C."/>
            <person name="Zhang J."/>
            <person name="Zhang Y."/>
            <person name="Li R."/>
            <person name="Xu Z."/>
            <person name="Li S."/>
            <person name="Li X."/>
            <person name="Zheng H."/>
            <person name="Cong L."/>
            <person name="Lin L."/>
            <person name="Yin J."/>
            <person name="Geng J."/>
            <person name="Li G."/>
            <person name="Shi J."/>
            <person name="Liu J."/>
            <person name="Lv H."/>
            <person name="Li J."/>
            <person name="Wang J."/>
            <person name="Deng Y."/>
            <person name="Ran L."/>
            <person name="Shi X."/>
            <person name="Wang X."/>
            <person name="Wu Q."/>
            <person name="Li C."/>
            <person name="Ren X."/>
            <person name="Wang J."/>
            <person name="Wang X."/>
            <person name="Li D."/>
            <person name="Liu D."/>
            <person name="Zhang X."/>
            <person name="Ji Z."/>
            <person name="Zhao W."/>
            <person name="Sun Y."/>
            <person name="Zhang Z."/>
            <person name="Bao J."/>
            <person name="Han Y."/>
            <person name="Dong L."/>
            <person name="Ji J."/>
            <person name="Chen P."/>
            <person name="Wu S."/>
            <person name="Liu J."/>
            <person name="Xiao Y."/>
            <person name="Bu D."/>
            <person name="Tan J."/>
            <person name="Yang L."/>
            <person name="Ye C."/>
            <person name="Zhang J."/>
            <person name="Xu J."/>
            <person name="Zhou Y."/>
            <person name="Yu Y."/>
            <person name="Zhang B."/>
            <person name="Zhuang S."/>
            <person name="Wei H."/>
            <person name="Liu B."/>
            <person name="Lei M."/>
            <person name="Yu H."/>
            <person name="Li Y."/>
            <person name="Xu H."/>
            <person name="Wei S."/>
            <person name="He X."/>
            <person name="Fang L."/>
            <person name="Zhang Z."/>
            <person name="Zhang Y."/>
            <person name="Huang X."/>
            <person name="Su Z."/>
            <person name="Tong W."/>
            <person name="Li J."/>
            <person name="Tong Z."/>
            <person name="Li S."/>
            <person name="Ye J."/>
            <person name="Wang L."/>
            <person name="Fang L."/>
            <person name="Lei T."/>
            <person name="Chen C.-S."/>
            <person name="Chen H.-C."/>
            <person name="Xu Z."/>
            <person name="Li H."/>
            <person name="Huang H."/>
            <person name="Zhang F."/>
            <person name="Xu H."/>
            <person name="Li N."/>
            <person name="Zhao C."/>
            <person name="Li S."/>
            <person name="Dong L."/>
            <person name="Huang Y."/>
            <person name="Li L."/>
            <person name="Xi Y."/>
            <person name="Qi Q."/>
            <person name="Li W."/>
            <person name="Zhang B."/>
            <person name="Hu W."/>
            <person name="Zhang Y."/>
            <person name="Tian X."/>
            <person name="Jiao Y."/>
            <person name="Liang X."/>
            <person name="Jin J."/>
            <person name="Gao L."/>
            <person name="Zheng W."/>
            <person name="Hao B."/>
            <person name="Liu S.-M."/>
            <person name="Wang W."/>
            <person name="Yuan L."/>
            <person name="Cao M."/>
            <person name="McDermott J."/>
            <person name="Samudrala R."/>
            <person name="Wang J."/>
            <person name="Wong G.K.-S."/>
            <person name="Yang H."/>
        </authorList>
    </citation>
    <scope>NUCLEOTIDE SEQUENCE [LARGE SCALE GENOMIC DNA]</scope>
    <source>
        <strain>cv. 93-11</strain>
    </source>
</reference>
<comment type="function">
    <text evidence="2">Transcription repressor. Interacts specifically with the W box (5'-(T)TGAC[CT]-3'), a frequently occurring elicitor-responsive cis-acting element. Regulates, probably indirectly, the activation of defense-related genes during defense response. Modulates plant innate immunity against X.oryzae pv. oryzae (Xoo). Negatively regulates the basal defense responses to the compatible fungus M.oryzae.</text>
</comment>
<comment type="subcellular location">
    <subcellularLocation>
        <location evidence="2 4">Nucleus</location>
    </subcellularLocation>
</comment>
<comment type="induction">
    <text evidence="1">Induced by biotic elicitors (e.g. fungal chitin oligosaccharide). Accumulates in response to M.oryzae.</text>
</comment>
<comment type="domain">
    <text evidence="2">The WRKY domain is required to bind DNA.</text>
</comment>
<comment type="similarity">
    <text evidence="7">Belongs to the WRKY group II-a family.</text>
</comment>
<comment type="sequence caution" evidence="7">
    <conflict type="erroneous initiation">
        <sequence resource="EMBL-CDS" id="EEC81085"/>
    </conflict>
    <text>Truncated N-terminus.</text>
</comment>
<feature type="chain" id="PRO_0000436953" description="WRKY transcription factor WRKY28">
    <location>
        <begin position="1"/>
        <end position="403"/>
    </location>
</feature>
<feature type="DNA-binding region" description="WRKY" evidence="4">
    <location>
        <begin position="245"/>
        <end position="311"/>
    </location>
</feature>
<feature type="region of interest" description="Disordered" evidence="6">
    <location>
        <begin position="157"/>
        <end position="178"/>
    </location>
</feature>
<feature type="region of interest" description="Disordered" evidence="6">
    <location>
        <begin position="306"/>
        <end position="335"/>
    </location>
</feature>
<feature type="coiled-coil region" evidence="3">
    <location>
        <begin position="101"/>
        <end position="135"/>
    </location>
</feature>
<feature type="short sequence motif" description="Nuclear localization signal" evidence="5">
    <location>
        <begin position="222"/>
        <end position="229"/>
    </location>
</feature>
<feature type="compositionally biased region" description="Low complexity" evidence="6">
    <location>
        <begin position="162"/>
        <end position="172"/>
    </location>
</feature>
<feature type="compositionally biased region" description="Basic and acidic residues" evidence="6">
    <location>
        <begin position="306"/>
        <end position="317"/>
    </location>
</feature>
<accession>B8B0R8</accession>
<dbReference type="EMBL" id="CM000131">
    <property type="protein sequence ID" value="EEC81085.1"/>
    <property type="status" value="ALT_INIT"/>
    <property type="molecule type" value="Genomic_DNA"/>
</dbReference>
<dbReference type="SMR" id="B8B0R8"/>
<dbReference type="STRING" id="39946.B8B0R8"/>
<dbReference type="HOGENOM" id="CLU_047067_0_0_1"/>
<dbReference type="Proteomes" id="UP000007015">
    <property type="component" value="Chromosome 6"/>
</dbReference>
<dbReference type="GO" id="GO:0005634">
    <property type="term" value="C:nucleus"/>
    <property type="evidence" value="ECO:0000250"/>
    <property type="project" value="UniProtKB"/>
</dbReference>
<dbReference type="GO" id="GO:0003700">
    <property type="term" value="F:DNA-binding transcription factor activity"/>
    <property type="evidence" value="ECO:0007669"/>
    <property type="project" value="InterPro"/>
</dbReference>
<dbReference type="GO" id="GO:0043565">
    <property type="term" value="F:sequence-specific DNA binding"/>
    <property type="evidence" value="ECO:0007669"/>
    <property type="project" value="InterPro"/>
</dbReference>
<dbReference type="GO" id="GO:0006952">
    <property type="term" value="P:defense response"/>
    <property type="evidence" value="ECO:0007669"/>
    <property type="project" value="UniProtKB-KW"/>
</dbReference>
<dbReference type="GO" id="GO:0045892">
    <property type="term" value="P:negative regulation of DNA-templated transcription"/>
    <property type="evidence" value="ECO:0000250"/>
    <property type="project" value="UniProtKB"/>
</dbReference>
<dbReference type="GO" id="GO:1905034">
    <property type="term" value="P:regulation of antifungal innate immune response"/>
    <property type="evidence" value="ECO:0000250"/>
    <property type="project" value="UniProtKB"/>
</dbReference>
<dbReference type="GO" id="GO:0010200">
    <property type="term" value="P:response to chitin"/>
    <property type="evidence" value="ECO:0000250"/>
    <property type="project" value="UniProtKB"/>
</dbReference>
<dbReference type="GO" id="GO:0009620">
    <property type="term" value="P:response to fungus"/>
    <property type="evidence" value="ECO:0000250"/>
    <property type="project" value="UniProtKB"/>
</dbReference>
<dbReference type="FunFam" id="2.20.25.80:FF:000008">
    <property type="entry name" value="WRKY transcription factor 40"/>
    <property type="match status" value="1"/>
</dbReference>
<dbReference type="Gene3D" id="2.20.25.80">
    <property type="entry name" value="WRKY domain"/>
    <property type="match status" value="1"/>
</dbReference>
<dbReference type="InterPro" id="IPR003657">
    <property type="entry name" value="WRKY_dom"/>
</dbReference>
<dbReference type="InterPro" id="IPR036576">
    <property type="entry name" value="WRKY_dom_sf"/>
</dbReference>
<dbReference type="InterPro" id="IPR044810">
    <property type="entry name" value="WRKY_plant"/>
</dbReference>
<dbReference type="PANTHER" id="PTHR31429">
    <property type="entry name" value="WRKY TRANSCRIPTION FACTOR 36-RELATED"/>
    <property type="match status" value="1"/>
</dbReference>
<dbReference type="PANTHER" id="PTHR31429:SF33">
    <property type="entry name" value="WRKY TRANSCRIPTION FACTOR WRKY28"/>
    <property type="match status" value="1"/>
</dbReference>
<dbReference type="Pfam" id="PF03106">
    <property type="entry name" value="WRKY"/>
    <property type="match status" value="1"/>
</dbReference>
<dbReference type="SMART" id="SM00774">
    <property type="entry name" value="WRKY"/>
    <property type="match status" value="1"/>
</dbReference>
<dbReference type="SUPFAM" id="SSF118290">
    <property type="entry name" value="WRKY DNA-binding domain"/>
    <property type="match status" value="1"/>
</dbReference>
<dbReference type="PROSITE" id="PS50811">
    <property type="entry name" value="WRKY"/>
    <property type="match status" value="1"/>
</dbReference>
<gene>
    <name evidence="7" type="primary">WRKY28</name>
    <name evidence="8" type="ORF">OsI_23911</name>
</gene>
<sequence length="403" mass="43508">MAKMLPPPSQSVPSRPPSWLYIPPRRRHGTFTSSCAFRLSPSSPSSPPPPVLDFQYIQFMDSWIEQTSLSLDLNVGLPSTARRSSAPAAPIKVLVEENFLSFKKDHEVEALEAELRRASEENKKLTEMLRAVVAKYPELQGQVNDMMSAAAAAAVNAGNHQSSTSEGGSVSPSRKRIRSVDSLDDAAHHRKPSPPFVAAAAAAAYASPDQMECTSAAAAAAAKRVVREDCKPKVSKRFVHADPSDLSLVVKDGYQWRKYGQKVTKDNPCPRAYFRCSFAPACPVKKKVQRSADDNTVLVATYEGEHNHAQPPHHDAGSKTAAAAKHSQHQPPPSAAAAVVRQQQEQAAAAGPSTEVAARKNLAEQMAATLTRDPGFKAALVTALSGRILELSPTRTDPSLERR</sequence>
<organism>
    <name type="scientific">Oryza sativa subsp. indica</name>
    <name type="common">Rice</name>
    <dbReference type="NCBI Taxonomy" id="39946"/>
    <lineage>
        <taxon>Eukaryota</taxon>
        <taxon>Viridiplantae</taxon>
        <taxon>Streptophyta</taxon>
        <taxon>Embryophyta</taxon>
        <taxon>Tracheophyta</taxon>
        <taxon>Spermatophyta</taxon>
        <taxon>Magnoliopsida</taxon>
        <taxon>Liliopsida</taxon>
        <taxon>Poales</taxon>
        <taxon>Poaceae</taxon>
        <taxon>BOP clade</taxon>
        <taxon>Oryzoideae</taxon>
        <taxon>Oryzeae</taxon>
        <taxon>Oryzinae</taxon>
        <taxon>Oryza</taxon>
        <taxon>Oryza sativa</taxon>
    </lineage>
</organism>
<protein>
    <recommendedName>
        <fullName evidence="7">WRKY transcription factor WRKY28</fullName>
        <shortName evidence="7">OsWRKY28</shortName>
    </recommendedName>
</protein>
<keyword id="KW-0175">Coiled coil</keyword>
<keyword id="KW-0238">DNA-binding</keyword>
<keyword id="KW-0539">Nucleus</keyword>
<keyword id="KW-0611">Plant defense</keyword>
<keyword id="KW-1185">Reference proteome</keyword>
<keyword id="KW-0678">Repressor</keyword>
<keyword id="KW-0804">Transcription</keyword>
<keyword id="KW-0805">Transcription regulation</keyword>
<evidence type="ECO:0000250" key="1">
    <source>
        <dbReference type="UniProtKB" id="Q0DAJ3"/>
    </source>
</evidence>
<evidence type="ECO:0000250" key="2">
    <source>
        <dbReference type="UniProtKB" id="Q6QHD1"/>
    </source>
</evidence>
<evidence type="ECO:0000255" key="3"/>
<evidence type="ECO:0000255" key="4">
    <source>
        <dbReference type="PROSITE-ProRule" id="PRU00223"/>
    </source>
</evidence>
<evidence type="ECO:0000255" key="5">
    <source>
        <dbReference type="PROSITE-ProRule" id="PRU00768"/>
    </source>
</evidence>
<evidence type="ECO:0000256" key="6">
    <source>
        <dbReference type="SAM" id="MobiDB-lite"/>
    </source>
</evidence>
<evidence type="ECO:0000305" key="7"/>
<evidence type="ECO:0000312" key="8">
    <source>
        <dbReference type="EMBL" id="EEC81085.1"/>
    </source>
</evidence>
<proteinExistence type="inferred from homology"/>